<comment type="function">
    <text evidence="1 2 6">Part of the gene cluster that mediates the biosynthesis of the antibiotic 2,4-dihydroxy-3-methyl-6-(2-oxopropyl)benzaldehyde (DHMBA) and its derivatives (PubMed:22510154, PubMed:23001671). The direct non-reducing polyketide synthase dbaI product is 2,4-dihydroxy-3-methyl-6-(2-oxopropyl)benzaldehyde (DHMBA), produced by condensation of one acetyl-CoA starter unit with 4 malonyl-CoA units and one methylation step (PubMed:22510154). The FAD-dependent monooxygenase dbaH is responsible for the synthesis of yellow pigments derived from the oxidation of DHMBA (PubMed:23001671). The roles of dbaB, C, E and F have still to be determined (Probable).</text>
</comment>
<comment type="pathway">
    <text evidence="6">Secondary metabolite biosynthesis.</text>
</comment>
<comment type="induction">
    <text evidence="2 3">Deletion of the conserved eukaryotic csnE deneddylase subunit of the COP9 signalosome leading to defect in protein degradation results in the activation of the silenced dba gene cluster (PubMed:23001671). Expression is positively regulated by the dba cluster specific transcription factor dbaA (PubMed:23001671). Expression is also controlled by the transcription factor flbB (PubMed:25701285).</text>
</comment>
<comment type="disruption phenotype">
    <text evidence="2">Does not lead to any phenotypic changes.</text>
</comment>
<comment type="similarity">
    <text evidence="5">Belongs to the YciI family.</text>
</comment>
<evidence type="ECO:0000269" key="1">
    <source>
    </source>
</evidence>
<evidence type="ECO:0000269" key="2">
    <source>
    </source>
</evidence>
<evidence type="ECO:0000269" key="3">
    <source>
    </source>
</evidence>
<evidence type="ECO:0000303" key="4">
    <source>
    </source>
</evidence>
<evidence type="ECO:0000305" key="5"/>
<evidence type="ECO:0000305" key="6">
    <source>
    </source>
</evidence>
<sequence>MAQLYDWLVETPANAEDLESRINTRPAHLEHNKPLIEAGTLVWGGPSLAAHPKAAGEDLAIVGSVMCIRAGSEEEVREMIRNDPYAKLGQVSIRMSVK</sequence>
<organism>
    <name type="scientific">Emericella nidulans (strain FGSC A4 / ATCC 38163 / CBS 112.46 / NRRL 194 / M139)</name>
    <name type="common">Aspergillus nidulans</name>
    <dbReference type="NCBI Taxonomy" id="227321"/>
    <lineage>
        <taxon>Eukaryota</taxon>
        <taxon>Fungi</taxon>
        <taxon>Dikarya</taxon>
        <taxon>Ascomycota</taxon>
        <taxon>Pezizomycotina</taxon>
        <taxon>Eurotiomycetes</taxon>
        <taxon>Eurotiomycetidae</taxon>
        <taxon>Eurotiales</taxon>
        <taxon>Aspergillaceae</taxon>
        <taxon>Aspergillus</taxon>
        <taxon>Aspergillus subgen. Nidulantes</taxon>
    </lineage>
</organism>
<proteinExistence type="evidence at transcript level"/>
<dbReference type="EMBL" id="BN001302">
    <property type="protein sequence ID" value="CBF73482.1"/>
    <property type="molecule type" value="Genomic_DNA"/>
</dbReference>
<dbReference type="SMR" id="C8V4J7"/>
<dbReference type="STRING" id="227321.C8V4J7"/>
<dbReference type="EnsemblFungi" id="CBF73482">
    <property type="protein sequence ID" value="CBF73482"/>
    <property type="gene ID" value="ANIA_11584"/>
</dbReference>
<dbReference type="eggNOG" id="ENOG502SC09">
    <property type="taxonomic scope" value="Eukaryota"/>
</dbReference>
<dbReference type="HOGENOM" id="CLU_110355_2_4_1"/>
<dbReference type="InParanoid" id="C8V4J7"/>
<dbReference type="OMA" id="CWERLPF"/>
<dbReference type="OrthoDB" id="5519740at2759"/>
<dbReference type="Proteomes" id="UP000000560">
    <property type="component" value="Chromosome II"/>
</dbReference>
<dbReference type="Gene3D" id="3.30.70.1060">
    <property type="entry name" value="Dimeric alpha+beta barrel"/>
    <property type="match status" value="1"/>
</dbReference>
<dbReference type="InterPro" id="IPR011008">
    <property type="entry name" value="Dimeric_a/b-barrel"/>
</dbReference>
<dbReference type="InterPro" id="IPR051807">
    <property type="entry name" value="Sec-metab_biosynth-assoc"/>
</dbReference>
<dbReference type="InterPro" id="IPR005545">
    <property type="entry name" value="YCII"/>
</dbReference>
<dbReference type="PANTHER" id="PTHR33606">
    <property type="entry name" value="PROTEIN YCII"/>
    <property type="match status" value="1"/>
</dbReference>
<dbReference type="PANTHER" id="PTHR33606:SF3">
    <property type="entry name" value="PROTEIN YCII"/>
    <property type="match status" value="1"/>
</dbReference>
<dbReference type="Pfam" id="PF03795">
    <property type="entry name" value="YCII"/>
    <property type="match status" value="1"/>
</dbReference>
<dbReference type="SUPFAM" id="SSF54909">
    <property type="entry name" value="Dimeric alpha+beta barrel"/>
    <property type="match status" value="1"/>
</dbReference>
<name>DBAC_EMENI</name>
<accession>C8V4J7</accession>
<keyword id="KW-1185">Reference proteome</keyword>
<feature type="chain" id="PRO_0000446356" description="Derivative of benzaldehyde biosynthesis cluster protein C">
    <location>
        <begin position="1"/>
        <end position="98"/>
    </location>
</feature>
<gene>
    <name evidence="4" type="primary">dbaC</name>
    <name type="ORF">ANIA_11584</name>
</gene>
<protein>
    <recommendedName>
        <fullName evidence="4">Derivative of benzaldehyde biosynthesis cluster protein C</fullName>
    </recommendedName>
</protein>
<reference key="1">
    <citation type="journal article" date="2005" name="Nature">
        <title>Sequencing of Aspergillus nidulans and comparative analysis with A. fumigatus and A. oryzae.</title>
        <authorList>
            <person name="Galagan J.E."/>
            <person name="Calvo S.E."/>
            <person name="Cuomo C."/>
            <person name="Ma L.-J."/>
            <person name="Wortman J.R."/>
            <person name="Batzoglou S."/>
            <person name="Lee S.-I."/>
            <person name="Bastuerkmen M."/>
            <person name="Spevak C.C."/>
            <person name="Clutterbuck J."/>
            <person name="Kapitonov V."/>
            <person name="Jurka J."/>
            <person name="Scazzocchio C."/>
            <person name="Farman M.L."/>
            <person name="Butler J."/>
            <person name="Purcell S."/>
            <person name="Harris S."/>
            <person name="Braus G.H."/>
            <person name="Draht O."/>
            <person name="Busch S."/>
            <person name="D'Enfert C."/>
            <person name="Bouchier C."/>
            <person name="Goldman G.H."/>
            <person name="Bell-Pedersen D."/>
            <person name="Griffiths-Jones S."/>
            <person name="Doonan J.H."/>
            <person name="Yu J."/>
            <person name="Vienken K."/>
            <person name="Pain A."/>
            <person name="Freitag M."/>
            <person name="Selker E.U."/>
            <person name="Archer D.B."/>
            <person name="Penalva M.A."/>
            <person name="Oakley B.R."/>
            <person name="Momany M."/>
            <person name="Tanaka T."/>
            <person name="Kumagai T."/>
            <person name="Asai K."/>
            <person name="Machida M."/>
            <person name="Nierman W.C."/>
            <person name="Denning D.W."/>
            <person name="Caddick M.X."/>
            <person name="Hynes M."/>
            <person name="Paoletti M."/>
            <person name="Fischer R."/>
            <person name="Miller B.L."/>
            <person name="Dyer P.S."/>
            <person name="Sachs M.S."/>
            <person name="Osmani S.A."/>
            <person name="Birren B.W."/>
        </authorList>
    </citation>
    <scope>NUCLEOTIDE SEQUENCE [LARGE SCALE GENOMIC DNA]</scope>
    <source>
        <strain>FGSC A4 / ATCC 38163 / CBS 112.46 / NRRL 194 / M139</strain>
    </source>
</reference>
<reference key="2">
    <citation type="journal article" date="2009" name="Fungal Genet. Biol.">
        <title>The 2008 update of the Aspergillus nidulans genome annotation: a community effort.</title>
        <authorList>
            <person name="Wortman J.R."/>
            <person name="Gilsenan J.M."/>
            <person name="Joardar V."/>
            <person name="Deegan J."/>
            <person name="Clutterbuck J."/>
            <person name="Andersen M.R."/>
            <person name="Archer D."/>
            <person name="Bencina M."/>
            <person name="Braus G."/>
            <person name="Coutinho P."/>
            <person name="von Dohren H."/>
            <person name="Doonan J."/>
            <person name="Driessen A.J."/>
            <person name="Durek P."/>
            <person name="Espeso E."/>
            <person name="Fekete E."/>
            <person name="Flipphi M."/>
            <person name="Estrada C.G."/>
            <person name="Geysens S."/>
            <person name="Goldman G."/>
            <person name="de Groot P.W."/>
            <person name="Hansen K."/>
            <person name="Harris S.D."/>
            <person name="Heinekamp T."/>
            <person name="Helmstaedt K."/>
            <person name="Henrissat B."/>
            <person name="Hofmann G."/>
            <person name="Homan T."/>
            <person name="Horio T."/>
            <person name="Horiuchi H."/>
            <person name="James S."/>
            <person name="Jones M."/>
            <person name="Karaffa L."/>
            <person name="Karanyi Z."/>
            <person name="Kato M."/>
            <person name="Keller N."/>
            <person name="Kelly D.E."/>
            <person name="Kiel J.A."/>
            <person name="Kim J.M."/>
            <person name="van der Klei I.J."/>
            <person name="Klis F.M."/>
            <person name="Kovalchuk A."/>
            <person name="Krasevec N."/>
            <person name="Kubicek C.P."/>
            <person name="Liu B."/>
            <person name="Maccabe A."/>
            <person name="Meyer V."/>
            <person name="Mirabito P."/>
            <person name="Miskei M."/>
            <person name="Mos M."/>
            <person name="Mullins J."/>
            <person name="Nelson D.R."/>
            <person name="Nielsen J."/>
            <person name="Oakley B.R."/>
            <person name="Osmani S.A."/>
            <person name="Pakula T."/>
            <person name="Paszewski A."/>
            <person name="Paulsen I."/>
            <person name="Pilsyk S."/>
            <person name="Pocsi I."/>
            <person name="Punt P.J."/>
            <person name="Ram A.F."/>
            <person name="Ren Q."/>
            <person name="Robellet X."/>
            <person name="Robson G."/>
            <person name="Seiboth B."/>
            <person name="van Solingen P."/>
            <person name="Specht T."/>
            <person name="Sun J."/>
            <person name="Taheri-Talesh N."/>
            <person name="Takeshita N."/>
            <person name="Ussery D."/>
            <person name="vanKuyk P.A."/>
            <person name="Visser H."/>
            <person name="van de Vondervoort P.J."/>
            <person name="de Vries R.P."/>
            <person name="Walton J."/>
            <person name="Xiang X."/>
            <person name="Xiong Y."/>
            <person name="Zeng A.P."/>
            <person name="Brandt B.W."/>
            <person name="Cornell M.J."/>
            <person name="van den Hondel C.A."/>
            <person name="Visser J."/>
            <person name="Oliver S.G."/>
            <person name="Turner G."/>
        </authorList>
    </citation>
    <scope>GENOME REANNOTATION</scope>
    <source>
        <strain>FGSC A4 / ATCC 38163 / CBS 112.46 / NRRL 194 / M139</strain>
    </source>
</reference>
<reference key="3">
    <citation type="journal article" date="2012" name="Appl. Environ. Microbiol.">
        <title>Breaking the silence: protein stabilization uncovers silenced biosynthetic gene clusters in the fungus Aspergillus nidulans.</title>
        <authorList>
            <person name="Gerke J."/>
            <person name="Bayram O."/>
            <person name="Feussner K."/>
            <person name="Landesfeind M."/>
            <person name="Shelest E."/>
            <person name="Feussner I."/>
            <person name="Braus G.H."/>
        </authorList>
    </citation>
    <scope>IDENTIFICATION</scope>
    <scope>INDUCTION</scope>
    <scope>FUNCTION</scope>
    <scope>DISRUPTION PHENOTYPE</scope>
    <scope>PATHWAY</scope>
</reference>
<reference key="4">
    <citation type="journal article" date="2012" name="J. Am. Chem. Soc.">
        <title>Illuminating the diversity of aromatic polyketide synthases in Aspergillus nidulans.</title>
        <authorList>
            <person name="Ahuja M."/>
            <person name="Chiang Y.M."/>
            <person name="Chang S.L."/>
            <person name="Praseuth M.B."/>
            <person name="Entwistle R."/>
            <person name="Sanchez J.F."/>
            <person name="Lo H.C."/>
            <person name="Yeh H.H."/>
            <person name="Oakley B.R."/>
            <person name="Wang C.C."/>
        </authorList>
    </citation>
    <scope>FUNCTION</scope>
</reference>
<reference key="5">
    <citation type="journal article" date="2015" name="Genetics">
        <title>Beyond asexual development: modifications in the gene expression profile caused by the absence of the Aspergillus nidulans transcription factor FlbB.</title>
        <authorList>
            <person name="Oiartzabal-Arano E."/>
            <person name="Garzia A."/>
            <person name="Gorostidi A."/>
            <person name="Ugalde U."/>
            <person name="Espeso E.A."/>
            <person name="Etxebeste O."/>
        </authorList>
    </citation>
    <scope>INDUCTION</scope>
</reference>